<feature type="chain" id="PRO_0000107554" description="Acetate kinase">
    <location>
        <begin position="1"/>
        <end position="398"/>
    </location>
</feature>
<feature type="active site" description="Proton donor/acceptor" evidence="1">
    <location>
        <position position="142"/>
    </location>
</feature>
<feature type="binding site" evidence="1">
    <location>
        <position position="7"/>
    </location>
    <ligand>
        <name>Mg(2+)</name>
        <dbReference type="ChEBI" id="CHEBI:18420"/>
    </ligand>
</feature>
<feature type="binding site" evidence="1">
    <location>
        <position position="14"/>
    </location>
    <ligand>
        <name>ATP</name>
        <dbReference type="ChEBI" id="CHEBI:30616"/>
    </ligand>
</feature>
<feature type="binding site" evidence="1">
    <location>
        <position position="85"/>
    </location>
    <ligand>
        <name>substrate</name>
    </ligand>
</feature>
<feature type="binding site" evidence="1">
    <location>
        <begin position="202"/>
        <end position="206"/>
    </location>
    <ligand>
        <name>ATP</name>
        <dbReference type="ChEBI" id="CHEBI:30616"/>
    </ligand>
</feature>
<feature type="binding site" evidence="1">
    <location>
        <begin position="277"/>
        <end position="279"/>
    </location>
    <ligand>
        <name>ATP</name>
        <dbReference type="ChEBI" id="CHEBI:30616"/>
    </ligand>
</feature>
<feature type="binding site" evidence="1">
    <location>
        <begin position="325"/>
        <end position="329"/>
    </location>
    <ligand>
        <name>ATP</name>
        <dbReference type="ChEBI" id="CHEBI:30616"/>
    </ligand>
</feature>
<feature type="binding site" evidence="1">
    <location>
        <position position="379"/>
    </location>
    <ligand>
        <name>Mg(2+)</name>
        <dbReference type="ChEBI" id="CHEBI:18420"/>
    </ligand>
</feature>
<feature type="site" description="Transition state stabilizer" evidence="1">
    <location>
        <position position="174"/>
    </location>
</feature>
<feature type="site" description="Transition state stabilizer" evidence="1">
    <location>
        <position position="235"/>
    </location>
</feature>
<evidence type="ECO:0000255" key="1">
    <source>
        <dbReference type="HAMAP-Rule" id="MF_00020"/>
    </source>
</evidence>
<keyword id="KW-0067">ATP-binding</keyword>
<keyword id="KW-0963">Cytoplasm</keyword>
<keyword id="KW-0418">Kinase</keyword>
<keyword id="KW-0460">Magnesium</keyword>
<keyword id="KW-0479">Metal-binding</keyword>
<keyword id="KW-0547">Nucleotide-binding</keyword>
<keyword id="KW-1185">Reference proteome</keyword>
<keyword id="KW-0808">Transferase</keyword>
<organism>
    <name type="scientific">Deinococcus radiodurans (strain ATCC 13939 / DSM 20539 / JCM 16871 / CCUG 27074 / LMG 4051 / NBRC 15346 / NCIMB 9279 / VKM B-1422 / R1)</name>
    <dbReference type="NCBI Taxonomy" id="243230"/>
    <lineage>
        <taxon>Bacteria</taxon>
        <taxon>Thermotogati</taxon>
        <taxon>Deinococcota</taxon>
        <taxon>Deinococci</taxon>
        <taxon>Deinococcales</taxon>
        <taxon>Deinococcaceae</taxon>
        <taxon>Deinococcus</taxon>
    </lineage>
</organism>
<dbReference type="EC" id="2.7.2.1" evidence="1"/>
<dbReference type="EMBL" id="AE000513">
    <property type="protein sequence ID" value="AAF12139.1"/>
    <property type="molecule type" value="Genomic_DNA"/>
</dbReference>
<dbReference type="PIR" id="B75254">
    <property type="entry name" value="B75254"/>
</dbReference>
<dbReference type="RefSeq" id="NP_296321.1">
    <property type="nucleotide sequence ID" value="NC_001263.1"/>
</dbReference>
<dbReference type="RefSeq" id="WP_010889226.1">
    <property type="nucleotide sequence ID" value="NC_001263.1"/>
</dbReference>
<dbReference type="SMR" id="Q9RR92"/>
<dbReference type="FunCoup" id="Q9RR92">
    <property type="interactions" value="354"/>
</dbReference>
<dbReference type="STRING" id="243230.DR_2602"/>
<dbReference type="PaxDb" id="243230-DR_2602"/>
<dbReference type="EnsemblBacteria" id="AAF12139">
    <property type="protein sequence ID" value="AAF12139"/>
    <property type="gene ID" value="DR_2602"/>
</dbReference>
<dbReference type="GeneID" id="69518856"/>
<dbReference type="KEGG" id="dra:DR_2602"/>
<dbReference type="PATRIC" id="fig|243230.17.peg.2849"/>
<dbReference type="eggNOG" id="COG0282">
    <property type="taxonomic scope" value="Bacteria"/>
</dbReference>
<dbReference type="HOGENOM" id="CLU_020352_0_1_0"/>
<dbReference type="InParanoid" id="Q9RR92"/>
<dbReference type="OrthoDB" id="9802453at2"/>
<dbReference type="UniPathway" id="UPA00340">
    <property type="reaction ID" value="UER00458"/>
</dbReference>
<dbReference type="Proteomes" id="UP000002524">
    <property type="component" value="Chromosome 1"/>
</dbReference>
<dbReference type="GO" id="GO:0005829">
    <property type="term" value="C:cytosol"/>
    <property type="evidence" value="ECO:0000318"/>
    <property type="project" value="GO_Central"/>
</dbReference>
<dbReference type="GO" id="GO:0008776">
    <property type="term" value="F:acetate kinase activity"/>
    <property type="evidence" value="ECO:0000318"/>
    <property type="project" value="GO_Central"/>
</dbReference>
<dbReference type="GO" id="GO:0005524">
    <property type="term" value="F:ATP binding"/>
    <property type="evidence" value="ECO:0007669"/>
    <property type="project" value="UniProtKB-KW"/>
</dbReference>
<dbReference type="GO" id="GO:0000287">
    <property type="term" value="F:magnesium ion binding"/>
    <property type="evidence" value="ECO:0007669"/>
    <property type="project" value="UniProtKB-UniRule"/>
</dbReference>
<dbReference type="GO" id="GO:0006083">
    <property type="term" value="P:acetate metabolic process"/>
    <property type="evidence" value="ECO:0000318"/>
    <property type="project" value="GO_Central"/>
</dbReference>
<dbReference type="GO" id="GO:0006085">
    <property type="term" value="P:acetyl-CoA biosynthetic process"/>
    <property type="evidence" value="ECO:0007669"/>
    <property type="project" value="UniProtKB-UniRule"/>
</dbReference>
<dbReference type="CDD" id="cd24010">
    <property type="entry name" value="ASKHA_NBD_AcK_PK"/>
    <property type="match status" value="1"/>
</dbReference>
<dbReference type="Gene3D" id="3.30.420.40">
    <property type="match status" value="2"/>
</dbReference>
<dbReference type="HAMAP" id="MF_00020">
    <property type="entry name" value="Acetate_kinase"/>
    <property type="match status" value="1"/>
</dbReference>
<dbReference type="InterPro" id="IPR004372">
    <property type="entry name" value="Ac/propionate_kinase"/>
</dbReference>
<dbReference type="InterPro" id="IPR000890">
    <property type="entry name" value="Aliphatic_acid_kin_short-chain"/>
</dbReference>
<dbReference type="InterPro" id="IPR023865">
    <property type="entry name" value="Aliphatic_acid_kinase_CS"/>
</dbReference>
<dbReference type="InterPro" id="IPR043129">
    <property type="entry name" value="ATPase_NBD"/>
</dbReference>
<dbReference type="NCBIfam" id="TIGR00016">
    <property type="entry name" value="ackA"/>
    <property type="match status" value="1"/>
</dbReference>
<dbReference type="PANTHER" id="PTHR21060">
    <property type="entry name" value="ACETATE KINASE"/>
    <property type="match status" value="1"/>
</dbReference>
<dbReference type="PANTHER" id="PTHR21060:SF21">
    <property type="entry name" value="ACETATE KINASE"/>
    <property type="match status" value="1"/>
</dbReference>
<dbReference type="Pfam" id="PF00871">
    <property type="entry name" value="Acetate_kinase"/>
    <property type="match status" value="1"/>
</dbReference>
<dbReference type="PIRSF" id="PIRSF000722">
    <property type="entry name" value="Acetate_prop_kin"/>
    <property type="match status" value="1"/>
</dbReference>
<dbReference type="PRINTS" id="PR00471">
    <property type="entry name" value="ACETATEKNASE"/>
</dbReference>
<dbReference type="SUPFAM" id="SSF53067">
    <property type="entry name" value="Actin-like ATPase domain"/>
    <property type="match status" value="2"/>
</dbReference>
<dbReference type="PROSITE" id="PS01075">
    <property type="entry name" value="ACETATE_KINASE_1"/>
    <property type="match status" value="1"/>
</dbReference>
<dbReference type="PROSITE" id="PS01076">
    <property type="entry name" value="ACETATE_KINASE_2"/>
    <property type="match status" value="1"/>
</dbReference>
<protein>
    <recommendedName>
        <fullName evidence="1">Acetate kinase</fullName>
        <ecNumber evidence="1">2.7.2.1</ecNumber>
    </recommendedName>
    <alternativeName>
        <fullName evidence="1">Acetokinase</fullName>
    </alternativeName>
</protein>
<gene>
    <name evidence="1" type="primary">ackA</name>
    <name type="ordered locus">DR_2602</name>
</gene>
<sequence>MWTLVLNSGSSSLKFALLNPASGEVRLSGLAERLGTPAAAVKLEHSGQQESRSLEGGSYDAALGEVLRELETLGMRSAVRAVGHRVVHGGERFSAPVLVTPEVLEAVRACVPLAPLHNPANIVGIEAAQQAFPKLPHVAVFDTAFHQTMPEVAYRYAVPEAWYSQHGVRRYGFHGTSHAYVAGRAAEMLQRPLPTLNLITAHLGNGASVCAVAGGRSVDTSMGLTPLEGLIMGSRSGDVDPGLHDYLARQAGLSLSEITAALNKESGLLGLSGLTNDMRELEKAALTGHRGARLALGAFIYRLAKCMAGMAVALGRVDGVVFTGGIGENSRTVRGETLRRLGVLGLHLDEEANKALPRGDVGVISLPGGPVALVIPTHEELMIARETAVIVGGRGYAL</sequence>
<reference key="1">
    <citation type="journal article" date="1999" name="Science">
        <title>Genome sequence of the radioresistant bacterium Deinococcus radiodurans R1.</title>
        <authorList>
            <person name="White O."/>
            <person name="Eisen J.A."/>
            <person name="Heidelberg J.F."/>
            <person name="Hickey E.K."/>
            <person name="Peterson J.D."/>
            <person name="Dodson R.J."/>
            <person name="Haft D.H."/>
            <person name="Gwinn M.L."/>
            <person name="Nelson W.C."/>
            <person name="Richardson D.L."/>
            <person name="Moffat K.S."/>
            <person name="Qin H."/>
            <person name="Jiang L."/>
            <person name="Pamphile W."/>
            <person name="Crosby M."/>
            <person name="Shen M."/>
            <person name="Vamathevan J.J."/>
            <person name="Lam P."/>
            <person name="McDonald L.A."/>
            <person name="Utterback T.R."/>
            <person name="Zalewski C."/>
            <person name="Makarova K.S."/>
            <person name="Aravind L."/>
            <person name="Daly M.J."/>
            <person name="Minton K.W."/>
            <person name="Fleischmann R.D."/>
            <person name="Ketchum K.A."/>
            <person name="Nelson K.E."/>
            <person name="Salzberg S.L."/>
            <person name="Smith H.O."/>
            <person name="Venter J.C."/>
            <person name="Fraser C.M."/>
        </authorList>
    </citation>
    <scope>NUCLEOTIDE SEQUENCE [LARGE SCALE GENOMIC DNA]</scope>
    <source>
        <strain>ATCC 13939 / DSM 20539 / JCM 16871 / CCUG 27074 / LMG 4051 / NBRC 15346 / NCIMB 9279 / VKM B-1422 / R1</strain>
    </source>
</reference>
<comment type="function">
    <text evidence="1">Catalyzes the formation of acetyl phosphate from acetate and ATP. Can also catalyze the reverse reaction.</text>
</comment>
<comment type="catalytic activity">
    <reaction evidence="1">
        <text>acetate + ATP = acetyl phosphate + ADP</text>
        <dbReference type="Rhea" id="RHEA:11352"/>
        <dbReference type="ChEBI" id="CHEBI:22191"/>
        <dbReference type="ChEBI" id="CHEBI:30089"/>
        <dbReference type="ChEBI" id="CHEBI:30616"/>
        <dbReference type="ChEBI" id="CHEBI:456216"/>
        <dbReference type="EC" id="2.7.2.1"/>
    </reaction>
</comment>
<comment type="cofactor">
    <cofactor evidence="1">
        <name>Mg(2+)</name>
        <dbReference type="ChEBI" id="CHEBI:18420"/>
    </cofactor>
    <cofactor evidence="1">
        <name>Mn(2+)</name>
        <dbReference type="ChEBI" id="CHEBI:29035"/>
    </cofactor>
    <text evidence="1">Mg(2+). Can also accept Mn(2+).</text>
</comment>
<comment type="pathway">
    <text evidence="1">Metabolic intermediate biosynthesis; acetyl-CoA biosynthesis; acetyl-CoA from acetate: step 1/2.</text>
</comment>
<comment type="subunit">
    <text evidence="1">Homodimer.</text>
</comment>
<comment type="subcellular location">
    <subcellularLocation>
        <location evidence="1">Cytoplasm</location>
    </subcellularLocation>
</comment>
<comment type="similarity">
    <text evidence="1">Belongs to the acetokinase family.</text>
</comment>
<name>ACKA_DEIRA</name>
<accession>Q9RR92</accession>
<proteinExistence type="inferred from homology"/>